<evidence type="ECO:0000269" key="1">
    <source>
    </source>
</evidence>
<evidence type="ECO:0000269" key="2">
    <source>
    </source>
</evidence>
<evidence type="ECO:0000269" key="3">
    <source>
    </source>
</evidence>
<evidence type="ECO:0000303" key="4">
    <source>
    </source>
</evidence>
<evidence type="ECO:0000303" key="5">
    <source>
    </source>
</evidence>
<evidence type="ECO:0000305" key="6"/>
<evidence type="ECO:0000312" key="7">
    <source>
        <dbReference type="SGD" id="S000000203"/>
    </source>
</evidence>
<protein>
    <recommendedName>
        <fullName evidence="5">Mitochondrial intermembrane space cysteine motif-containing protein MIX23</fullName>
    </recommendedName>
    <alternativeName>
        <fullName evidence="5">Mitochondrial intermembrane space CX(n)C motif protein of 23 kDa</fullName>
    </alternativeName>
</protein>
<accession>P38162</accession>
<accession>D6VPP6</accession>
<dbReference type="EMBL" id="X79489">
    <property type="protein sequence ID" value="CAA55988.1"/>
    <property type="molecule type" value="Genomic_DNA"/>
</dbReference>
<dbReference type="EMBL" id="Z35868">
    <property type="protein sequence ID" value="CAA84934.1"/>
    <property type="molecule type" value="Genomic_DNA"/>
</dbReference>
<dbReference type="EMBL" id="BK006936">
    <property type="protein sequence ID" value="DAA07016.1"/>
    <property type="molecule type" value="Genomic_DNA"/>
</dbReference>
<dbReference type="PIR" id="S45388">
    <property type="entry name" value="S45388"/>
</dbReference>
<dbReference type="RefSeq" id="NP_009443.1">
    <property type="nucleotide sequence ID" value="NM_001178347.1"/>
</dbReference>
<dbReference type="SMR" id="P38162"/>
<dbReference type="BioGRID" id="32596">
    <property type="interactions" value="47"/>
</dbReference>
<dbReference type="DIP" id="DIP-3952N"/>
<dbReference type="FunCoup" id="P38162">
    <property type="interactions" value="45"/>
</dbReference>
<dbReference type="IntAct" id="P38162">
    <property type="interactions" value="1"/>
</dbReference>
<dbReference type="STRING" id="4932.YBL107C"/>
<dbReference type="PaxDb" id="4932-YBL107C"/>
<dbReference type="PeptideAtlas" id="P38162"/>
<dbReference type="EnsemblFungi" id="YBL107C_mRNA">
    <property type="protein sequence ID" value="YBL107C"/>
    <property type="gene ID" value="YBL107C"/>
</dbReference>
<dbReference type="GeneID" id="852167"/>
<dbReference type="KEGG" id="sce:YBL107C"/>
<dbReference type="AGR" id="SGD:S000000203"/>
<dbReference type="SGD" id="S000000203">
    <property type="gene designation" value="MIX23"/>
</dbReference>
<dbReference type="VEuPathDB" id="FungiDB:YBL107C"/>
<dbReference type="eggNOG" id="ENOG502S17Q">
    <property type="taxonomic scope" value="Eukaryota"/>
</dbReference>
<dbReference type="HOGENOM" id="CLU_118733_0_0_1"/>
<dbReference type="InParanoid" id="P38162"/>
<dbReference type="OMA" id="QFCFNER"/>
<dbReference type="OrthoDB" id="5593818at2759"/>
<dbReference type="BioCyc" id="YEAST:G3O-28991-MONOMER"/>
<dbReference type="BioGRID-ORCS" id="852167">
    <property type="hits" value="1 hit in 10 CRISPR screens"/>
</dbReference>
<dbReference type="PRO" id="PR:P38162"/>
<dbReference type="Proteomes" id="UP000002311">
    <property type="component" value="Chromosome II"/>
</dbReference>
<dbReference type="RNAct" id="P38162">
    <property type="molecule type" value="protein"/>
</dbReference>
<dbReference type="GO" id="GO:0005737">
    <property type="term" value="C:cytoplasm"/>
    <property type="evidence" value="ECO:0007005"/>
    <property type="project" value="SGD"/>
</dbReference>
<dbReference type="GO" id="GO:0005758">
    <property type="term" value="C:mitochondrial intermembrane space"/>
    <property type="evidence" value="ECO:0000314"/>
    <property type="project" value="SGD"/>
</dbReference>
<dbReference type="GO" id="GO:0005739">
    <property type="term" value="C:mitochondrion"/>
    <property type="evidence" value="ECO:0007005"/>
    <property type="project" value="SGD"/>
</dbReference>
<dbReference type="GO" id="GO:1903955">
    <property type="term" value="P:positive regulation of protein targeting to mitochondrion"/>
    <property type="evidence" value="ECO:0000315"/>
    <property type="project" value="UniProtKB"/>
</dbReference>
<dbReference type="GO" id="GO:0015031">
    <property type="term" value="P:protein transport"/>
    <property type="evidence" value="ECO:0007669"/>
    <property type="project" value="UniProtKB-KW"/>
</dbReference>
<dbReference type="InterPro" id="IPR019171">
    <property type="entry name" value="MIX23"/>
</dbReference>
<dbReference type="InterPro" id="IPR016805">
    <property type="entry name" value="MIX23_fungal"/>
</dbReference>
<dbReference type="PANTHER" id="PTHR31905">
    <property type="entry name" value="COILED-COIL DOMAIN-CONTAINING PROTEIN 58"/>
    <property type="match status" value="1"/>
</dbReference>
<dbReference type="PANTHER" id="PTHR31905:SF2">
    <property type="entry name" value="PROTEIN MIX23"/>
    <property type="match status" value="1"/>
</dbReference>
<dbReference type="Pfam" id="PF09774">
    <property type="entry name" value="MIX23"/>
    <property type="match status" value="1"/>
</dbReference>
<dbReference type="PIRSF" id="PIRSF022603">
    <property type="entry name" value="UCP022603"/>
    <property type="match status" value="1"/>
</dbReference>
<feature type="chain" id="PRO_0000202439" description="Mitochondrial intermembrane space cysteine motif-containing protein MIX23">
    <location>
        <begin position="1"/>
        <end position="196"/>
    </location>
</feature>
<feature type="short sequence motif" description="Cx14C motif" evidence="4">
    <location>
        <begin position="99"/>
        <end position="114"/>
    </location>
</feature>
<feature type="short sequence motif" description="Cx13C motif" evidence="4">
    <location>
        <begin position="178"/>
        <end position="192"/>
    </location>
</feature>
<feature type="mutagenesis site" description="Loss of MIA40-dependent import into the mitochondrial intermembrane space; when associated with S-77, S-99, S-114, S-178 and S-192." evidence="3">
    <original>C</original>
    <variation>S</variation>
    <location>
        <position position="38"/>
    </location>
</feature>
<feature type="mutagenesis site" description="Loss of MIA40-dependent import into the mitochondrial intermembrane space; when associated with S-38, S-99, S-114, S-178 and S-192." evidence="3">
    <original>C</original>
    <variation>S</variation>
    <location>
        <position position="77"/>
    </location>
</feature>
<feature type="mutagenesis site" description="Loss of MIA40-dependent import into the mitochondrial intermembrane space; when associated with S-38, S-77, S-114, S-178 and S-192." evidence="3">
    <original>C</original>
    <variation>S</variation>
    <location>
        <position position="99"/>
    </location>
</feature>
<feature type="mutagenesis site" description="Loss of MIA40-dependent import into the mitochondrial intermembrane space; when associated with S-38, S-77, S-99, S-178 and S-192." evidence="3">
    <original>C</original>
    <variation>S</variation>
    <location>
        <position position="114"/>
    </location>
</feature>
<feature type="mutagenesis site" description="Loss of MIA40-dependent import into the mitochondrial intermembrane space; when associated with S-38, S-77, S-99, S-114 and S-192." evidence="3">
    <original>C</original>
    <variation>S</variation>
    <location>
        <position position="178"/>
    </location>
</feature>
<feature type="mutagenesis site" description="Loss of MIA40-dependent import into the mitochondrial intermembrane space; when associated with S-38, S-77, S-99, S-114 and S-178." evidence="3">
    <original>C</original>
    <variation>S</variation>
    <location>
        <position position="192"/>
    </location>
</feature>
<proteinExistence type="evidence at protein level"/>
<organism>
    <name type="scientific">Saccharomyces cerevisiae (strain ATCC 204508 / S288c)</name>
    <name type="common">Baker's yeast</name>
    <dbReference type="NCBI Taxonomy" id="559292"/>
    <lineage>
        <taxon>Eukaryota</taxon>
        <taxon>Fungi</taxon>
        <taxon>Dikarya</taxon>
        <taxon>Ascomycota</taxon>
        <taxon>Saccharomycotina</taxon>
        <taxon>Saccharomycetes</taxon>
        <taxon>Saccharomycetales</taxon>
        <taxon>Saccharomycetaceae</taxon>
        <taxon>Saccharomyces</taxon>
    </lineage>
</organism>
<keyword id="KW-0496">Mitochondrion</keyword>
<keyword id="KW-0653">Protein transport</keyword>
<keyword id="KW-1185">Reference proteome</keyword>
<keyword id="KW-0813">Transport</keyword>
<name>MIX23_YEAST</name>
<comment type="function">
    <text evidence="3">Regulator of the mitochondrial protein import machinery that is localized in the mitochondrial intermembrane space (IMS) and facilitates the transport of proteins from the cytosol into the mitochondrial matrix (PubMed:32826315). Not essential for mitochondrial protein import but induced and required when mitochondrial import is compromised (PubMed:32826315). Stimulates or stabilizes the translocation into the mitochondria of proteins such as OXA1, ATP1 and COX12 (PubMed:32826315).</text>
</comment>
<comment type="subcellular location">
    <subcellularLocation>
        <location evidence="2 3">Mitochondrion intermembrane space</location>
    </subcellularLocation>
    <text evidence="2 3">Imported into the mitochondria via the mitochondrial MIA40-ERV1 machinery.</text>
</comment>
<comment type="induction">
    <text evidence="3">Up-regulated by RPN4 transcription factor upon mitochondrial protein-induced stress conditions such as the accumulation in the cytosol of non-imported mitochondrial precursors.</text>
</comment>
<comment type="domain">
    <text evidence="2">The Cx14C/Cx13C motifs are involved in the recognition by the mitochondrial MIA40-ERV1 disulfide relay system and the subsequent transfer of disulfide bonds by dithiol/disulfide exchange reactions to the newly imported protein.</text>
</comment>
<comment type="miscellaneous">
    <text evidence="1">Present with 768 molecules/cell in log phase SD medium.</text>
</comment>
<comment type="similarity">
    <text evidence="6">Belongs to the MIX23 family.</text>
</comment>
<reference key="1">
    <citation type="journal article" date="1995" name="Yeast">
        <title>Sequence analysis of a 78.6 kb segment of the left end of Saccharomyces cerevisiae chromosome II.</title>
        <authorList>
            <person name="Obermaier B."/>
            <person name="Gassenhuber J."/>
            <person name="Piravandi E."/>
            <person name="Domdey H."/>
        </authorList>
    </citation>
    <scope>NUCLEOTIDE SEQUENCE [GENOMIC DNA]</scope>
    <source>
        <strain>ATCC 204508 / S288c</strain>
    </source>
</reference>
<reference key="2">
    <citation type="journal article" date="1994" name="EMBO J.">
        <title>Complete DNA sequence of yeast chromosome II.</title>
        <authorList>
            <person name="Feldmann H."/>
            <person name="Aigle M."/>
            <person name="Aljinovic G."/>
            <person name="Andre B."/>
            <person name="Baclet M.C."/>
            <person name="Barthe C."/>
            <person name="Baur A."/>
            <person name="Becam A.-M."/>
            <person name="Biteau N."/>
            <person name="Boles E."/>
            <person name="Brandt T."/>
            <person name="Brendel M."/>
            <person name="Brueckner M."/>
            <person name="Bussereau F."/>
            <person name="Christiansen C."/>
            <person name="Contreras R."/>
            <person name="Crouzet M."/>
            <person name="Cziepluch C."/>
            <person name="Demolis N."/>
            <person name="Delaveau T."/>
            <person name="Doignon F."/>
            <person name="Domdey H."/>
            <person name="Duesterhus S."/>
            <person name="Dubois E."/>
            <person name="Dujon B."/>
            <person name="El Bakkoury M."/>
            <person name="Entian K.-D."/>
            <person name="Feuermann M."/>
            <person name="Fiers W."/>
            <person name="Fobo G.M."/>
            <person name="Fritz C."/>
            <person name="Gassenhuber J."/>
            <person name="Glansdorff N."/>
            <person name="Goffeau A."/>
            <person name="Grivell L.A."/>
            <person name="de Haan M."/>
            <person name="Hein C."/>
            <person name="Herbert C.J."/>
            <person name="Hollenberg C.P."/>
            <person name="Holmstroem K."/>
            <person name="Jacq C."/>
            <person name="Jacquet M."/>
            <person name="Jauniaux J.-C."/>
            <person name="Jonniaux J.-L."/>
            <person name="Kallesoee T."/>
            <person name="Kiesau P."/>
            <person name="Kirchrath L."/>
            <person name="Koetter P."/>
            <person name="Korol S."/>
            <person name="Liebl S."/>
            <person name="Logghe M."/>
            <person name="Lohan A.J.E."/>
            <person name="Louis E.J."/>
            <person name="Li Z.Y."/>
            <person name="Maat M.J."/>
            <person name="Mallet L."/>
            <person name="Mannhaupt G."/>
            <person name="Messenguy F."/>
            <person name="Miosga T."/>
            <person name="Molemans F."/>
            <person name="Mueller S."/>
            <person name="Nasr F."/>
            <person name="Obermaier B."/>
            <person name="Perea J."/>
            <person name="Pierard A."/>
            <person name="Piravandi E."/>
            <person name="Pohl F.M."/>
            <person name="Pohl T.M."/>
            <person name="Potier S."/>
            <person name="Proft M."/>
            <person name="Purnelle B."/>
            <person name="Ramezani Rad M."/>
            <person name="Rieger M."/>
            <person name="Rose M."/>
            <person name="Schaaff-Gerstenschlaeger I."/>
            <person name="Scherens B."/>
            <person name="Schwarzlose C."/>
            <person name="Skala J."/>
            <person name="Slonimski P.P."/>
            <person name="Smits P.H.M."/>
            <person name="Souciet J.-L."/>
            <person name="Steensma H.Y."/>
            <person name="Stucka R."/>
            <person name="Urrestarazu L.A."/>
            <person name="van der Aart Q.J.M."/>
            <person name="Van Dyck L."/>
            <person name="Vassarotti A."/>
            <person name="Vetter I."/>
            <person name="Vierendeels F."/>
            <person name="Vissers S."/>
            <person name="Wagner G."/>
            <person name="de Wergifosse P."/>
            <person name="Wolfe K.H."/>
            <person name="Zagulski M."/>
            <person name="Zimmermann F.K."/>
            <person name="Mewes H.-W."/>
            <person name="Kleine K."/>
        </authorList>
    </citation>
    <scope>NUCLEOTIDE SEQUENCE [LARGE SCALE GENOMIC DNA]</scope>
    <source>
        <strain>ATCC 204508 / S288c</strain>
    </source>
</reference>
<reference key="3">
    <citation type="journal article" date="2014" name="G3 (Bethesda)">
        <title>The reference genome sequence of Saccharomyces cerevisiae: Then and now.</title>
        <authorList>
            <person name="Engel S.R."/>
            <person name="Dietrich F.S."/>
            <person name="Fisk D.G."/>
            <person name="Binkley G."/>
            <person name="Balakrishnan R."/>
            <person name="Costanzo M.C."/>
            <person name="Dwight S.S."/>
            <person name="Hitz B.C."/>
            <person name="Karra K."/>
            <person name="Nash R.S."/>
            <person name="Weng S."/>
            <person name="Wong E.D."/>
            <person name="Lloyd P."/>
            <person name="Skrzypek M.S."/>
            <person name="Miyasato S.R."/>
            <person name="Simison M."/>
            <person name="Cherry J.M."/>
        </authorList>
    </citation>
    <scope>GENOME REANNOTATION</scope>
    <source>
        <strain>ATCC 204508 / S288c</strain>
    </source>
</reference>
<reference key="4">
    <citation type="journal article" date="2003" name="Nature">
        <title>Global analysis of protein expression in yeast.</title>
        <authorList>
            <person name="Ghaemmaghami S."/>
            <person name="Huh W.-K."/>
            <person name="Bower K."/>
            <person name="Howson R.W."/>
            <person name="Belle A."/>
            <person name="Dephoure N."/>
            <person name="O'Shea E.K."/>
            <person name="Weissman J.S."/>
        </authorList>
    </citation>
    <scope>LEVEL OF PROTEIN EXPRESSION [LARGE SCALE ANALYSIS]</scope>
</reference>
<reference key="5">
    <citation type="journal article" date="2012" name="Mol. Cell. Proteomics">
        <title>Intermembrane space proteome of yeast mitochondria.</title>
        <authorList>
            <person name="Voegtle F.N."/>
            <person name="Burkhart J.M."/>
            <person name="Rao S."/>
            <person name="Gerbeth C."/>
            <person name="Hinrichs J."/>
            <person name="Martinou J.C."/>
            <person name="Chacinska A."/>
            <person name="Sickmann A."/>
            <person name="Zahedi R.P."/>
            <person name="Meisinger C."/>
        </authorList>
    </citation>
    <scope>IDENTIFICATION BY MASS SPECTROMETRY</scope>
    <scope>SUBCELLULAR LOCATION [LARGE SCALE ANALYSIS]</scope>
    <scope>DOMAIN</scope>
</reference>
<reference key="6">
    <citation type="journal article" date="2014" name="J. Cell Biol.">
        <title>Uniform nomenclature for the mitochondrial contact site and cristae organizing system.</title>
        <authorList>
            <person name="Pfanner N."/>
            <person name="van der Laan M."/>
            <person name="Amati P."/>
            <person name="Capaldi R.A."/>
            <person name="Caudy A.A."/>
            <person name="Chacinska A."/>
            <person name="Darshi M."/>
            <person name="Deckers M."/>
            <person name="Hoppins S."/>
            <person name="Icho T."/>
            <person name="Jakobs S."/>
            <person name="Ji J."/>
            <person name="Kozjak-Pavlovic V."/>
            <person name="Meisinger C."/>
            <person name="Odgren P.R."/>
            <person name="Park S.K."/>
            <person name="Rehling P."/>
            <person name="Reichert A.S."/>
            <person name="Sheikh M.S."/>
            <person name="Taylor S.S."/>
            <person name="Tsuchida N."/>
            <person name="van der Bliek A.M."/>
            <person name="van der Klei I.J."/>
            <person name="Weissman J.S."/>
            <person name="Westermann B."/>
            <person name="Zha J."/>
            <person name="Neupert W."/>
            <person name="Nunnari J."/>
        </authorList>
    </citation>
    <scope>GENE NAME</scope>
</reference>
<reference key="7">
    <citation type="journal article" date="2020" name="J. Biol. Chem.">
        <title>The intermembrane space protein Mix23 is a novel stress-induced mitochondrial import factor.</title>
        <authorList>
            <person name="Zoeller E."/>
            <person name="Laborenz J."/>
            <person name="Kraemer L."/>
            <person name="Boos F."/>
            <person name="Raeschle M."/>
            <person name="Alexander R.T."/>
            <person name="Herrmann J.M."/>
        </authorList>
    </citation>
    <scope>FUNCTION</scope>
    <scope>SUBCELLULAR LOCATION</scope>
    <scope>INDUCTION BY RPN4</scope>
    <scope>MUTAGENESIS OF CYS-38; CYS-77; CYS-99; CYS-114; CYS-178 AND CYS-192</scope>
</reference>
<gene>
    <name evidence="7" type="primary">MIX23</name>
    <name evidence="4" type="synonym">MIC23</name>
    <name evidence="4" type="ordered locus">YBL107C</name>
    <name type="ORF">YBL0805</name>
</gene>
<sequence>MVDNRRTFTAPQSLLETNLTFPNDEPSLTTITVTRERCVDPSLIDSFLRFLRHGSDDIIRQKLNNYRKGSINGKNKCKEFLKQELYPNWQIRNNIISFCEKEAAEMKNETDQQCGNNKKTTAEPLIDARIDPYAARERAEKQEAQYKDWTKVTEWVANNRKIEQILTSTTEGILRQNCEQNNDYLKEFTQFCKDNS</sequence>